<name>LLPH_XENLA</name>
<sequence length="123" mass="14262">MAKSLRSKWKRKMRAEKRKKNAPKELARLKTVLAKGSNVLMDDVKEIATVVPAKKINEKMDLDVDAPEGESSKMDTELKRNKKNLRDQHGQYPVWFNQRQQKKLKSQCGKKKGKSKQAKKLAW</sequence>
<reference key="1">
    <citation type="submission" date="2003-01" db="EMBL/GenBank/DDBJ databases">
        <authorList>
            <consortium name="NIH - Xenopus Gene Collection (XGC) project"/>
        </authorList>
    </citation>
    <scope>NUCLEOTIDE SEQUENCE [LARGE SCALE MRNA]</scope>
    <source>
        <tissue>Tail bud</tissue>
    </source>
</reference>
<proteinExistence type="evidence at transcript level"/>
<accession>Q7ZY35</accession>
<comment type="function">
    <text evidence="2">Regulates dendritic and spine growth and synaptic transmission.</text>
</comment>
<comment type="subcellular location">
    <subcellularLocation>
        <location evidence="2">Nucleus</location>
        <location evidence="2">Nucleolus</location>
    </subcellularLocation>
    <subcellularLocation>
        <location evidence="1">Chromosome</location>
    </subcellularLocation>
    <text evidence="1 2">Cell-permeable protein (By similarity). Localizes at the chromosome periphery during mitosis (By similarity).</text>
</comment>
<comment type="similarity">
    <text evidence="4">Belongs to the learning-associated protein family.</text>
</comment>
<dbReference type="EMBL" id="BC043994">
    <property type="protein sequence ID" value="AAH43994.1"/>
    <property type="molecule type" value="mRNA"/>
</dbReference>
<dbReference type="RefSeq" id="NP_001079521.1">
    <property type="nucleotide sequence ID" value="NM_001086052.1"/>
</dbReference>
<dbReference type="SMR" id="Q7ZY35"/>
<dbReference type="DNASU" id="379208"/>
<dbReference type="GeneID" id="379208"/>
<dbReference type="KEGG" id="xla:379208"/>
<dbReference type="AGR" id="Xenbase:XB-GENE-1188271"/>
<dbReference type="CTD" id="379208"/>
<dbReference type="Xenbase" id="XB-GENE-1188271">
    <property type="gene designation" value="llph.S"/>
</dbReference>
<dbReference type="OrthoDB" id="6257894at2759"/>
<dbReference type="Proteomes" id="UP000186698">
    <property type="component" value="Chromosome 3S"/>
</dbReference>
<dbReference type="Bgee" id="379208">
    <property type="expression patterns" value="Expressed in neurula embryo and 19 other cell types or tissues"/>
</dbReference>
<dbReference type="GO" id="GO:0005694">
    <property type="term" value="C:chromosome"/>
    <property type="evidence" value="ECO:0000250"/>
    <property type="project" value="UniProtKB"/>
</dbReference>
<dbReference type="GO" id="GO:0005730">
    <property type="term" value="C:nucleolus"/>
    <property type="evidence" value="ECO:0000250"/>
    <property type="project" value="UniProtKB"/>
</dbReference>
<dbReference type="GO" id="GO:0001099">
    <property type="term" value="F:basal RNA polymerase II transcription machinery binding"/>
    <property type="evidence" value="ECO:0000250"/>
    <property type="project" value="UniProtKB"/>
</dbReference>
<dbReference type="GO" id="GO:0003723">
    <property type="term" value="F:RNA binding"/>
    <property type="evidence" value="ECO:0007669"/>
    <property type="project" value="TreeGrafter"/>
</dbReference>
<dbReference type="GO" id="GO:0097484">
    <property type="term" value="P:dendrite extension"/>
    <property type="evidence" value="ECO:0000250"/>
    <property type="project" value="UniProtKB"/>
</dbReference>
<dbReference type="GO" id="GO:0060999">
    <property type="term" value="P:positive regulation of dendritic spine development"/>
    <property type="evidence" value="ECO:0000250"/>
    <property type="project" value="UniProtKB"/>
</dbReference>
<dbReference type="InterPro" id="IPR018784">
    <property type="entry name" value="LLPH-like"/>
</dbReference>
<dbReference type="PANTHER" id="PTHR34253">
    <property type="entry name" value="PROTEIN LLP HOMOLOG"/>
    <property type="match status" value="1"/>
</dbReference>
<dbReference type="PANTHER" id="PTHR34253:SF1">
    <property type="entry name" value="PROTEIN LLP HOMOLOG"/>
    <property type="match status" value="1"/>
</dbReference>
<dbReference type="Pfam" id="PF10169">
    <property type="entry name" value="LLPH"/>
    <property type="match status" value="1"/>
</dbReference>
<evidence type="ECO:0000250" key="1">
    <source>
        <dbReference type="UniProtKB" id="Q9BRT6"/>
    </source>
</evidence>
<evidence type="ECO:0000250" key="2">
    <source>
        <dbReference type="UniProtKB" id="Q9D945"/>
    </source>
</evidence>
<evidence type="ECO:0000256" key="3">
    <source>
        <dbReference type="SAM" id="MobiDB-lite"/>
    </source>
</evidence>
<evidence type="ECO:0000305" key="4"/>
<gene>
    <name type="primary">llph</name>
</gene>
<protein>
    <recommendedName>
        <fullName>Protein LLP homolog</fullName>
    </recommendedName>
    <alternativeName>
        <fullName>Protein LAPS18-like</fullName>
    </alternativeName>
</protein>
<keyword id="KW-0158">Chromosome</keyword>
<keyword id="KW-0539">Nucleus</keyword>
<keyword id="KW-1185">Reference proteome</keyword>
<feature type="chain" id="PRO_0000274350" description="Protein LLP homolog">
    <location>
        <begin position="1"/>
        <end position="123"/>
    </location>
</feature>
<feature type="region of interest" description="Disordered" evidence="3">
    <location>
        <begin position="1"/>
        <end position="22"/>
    </location>
</feature>
<feature type="region of interest" description="Disordered" evidence="3">
    <location>
        <begin position="61"/>
        <end position="123"/>
    </location>
</feature>
<feature type="compositionally biased region" description="Basic residues" evidence="3">
    <location>
        <begin position="1"/>
        <end position="21"/>
    </location>
</feature>
<feature type="compositionally biased region" description="Basic and acidic residues" evidence="3">
    <location>
        <begin position="70"/>
        <end position="89"/>
    </location>
</feature>
<feature type="compositionally biased region" description="Basic residues" evidence="3">
    <location>
        <begin position="100"/>
        <end position="123"/>
    </location>
</feature>
<organism>
    <name type="scientific">Xenopus laevis</name>
    <name type="common">African clawed frog</name>
    <dbReference type="NCBI Taxonomy" id="8355"/>
    <lineage>
        <taxon>Eukaryota</taxon>
        <taxon>Metazoa</taxon>
        <taxon>Chordata</taxon>
        <taxon>Craniata</taxon>
        <taxon>Vertebrata</taxon>
        <taxon>Euteleostomi</taxon>
        <taxon>Amphibia</taxon>
        <taxon>Batrachia</taxon>
        <taxon>Anura</taxon>
        <taxon>Pipoidea</taxon>
        <taxon>Pipidae</taxon>
        <taxon>Xenopodinae</taxon>
        <taxon>Xenopus</taxon>
        <taxon>Xenopus</taxon>
    </lineage>
</organism>